<evidence type="ECO:0000255" key="1">
    <source>
        <dbReference type="HAMAP-Rule" id="MF_01642"/>
    </source>
</evidence>
<evidence type="ECO:0000269" key="2">
    <source>
    </source>
</evidence>
<evidence type="ECO:0000303" key="3">
    <source>
    </source>
</evidence>
<dbReference type="EC" id="2.6.1.83" evidence="1 2"/>
<dbReference type="EMBL" id="BA000022">
    <property type="protein sequence ID" value="BAA10583.1"/>
    <property type="molecule type" value="Genomic_DNA"/>
</dbReference>
<dbReference type="PIR" id="S76639">
    <property type="entry name" value="S76639"/>
</dbReference>
<dbReference type="SMR" id="Q55828"/>
<dbReference type="STRING" id="1148.gene:10500087"/>
<dbReference type="PaxDb" id="1148-1001746"/>
<dbReference type="EnsemblBacteria" id="BAA10583">
    <property type="protein sequence ID" value="BAA10583"/>
    <property type="gene ID" value="BAA10583"/>
</dbReference>
<dbReference type="KEGG" id="syn:sll0480"/>
<dbReference type="eggNOG" id="COG0436">
    <property type="taxonomic scope" value="Bacteria"/>
</dbReference>
<dbReference type="InParanoid" id="Q55828"/>
<dbReference type="PhylomeDB" id="Q55828"/>
<dbReference type="BRENDA" id="2.6.1.83">
    <property type="organism ID" value="382"/>
</dbReference>
<dbReference type="UniPathway" id="UPA00034">
    <property type="reaction ID" value="UER00466"/>
</dbReference>
<dbReference type="Proteomes" id="UP000001425">
    <property type="component" value="Chromosome"/>
</dbReference>
<dbReference type="GO" id="GO:0010285">
    <property type="term" value="F:L,L-diaminopimelate aminotransferase activity"/>
    <property type="evidence" value="ECO:0007669"/>
    <property type="project" value="UniProtKB-UniRule"/>
</dbReference>
<dbReference type="GO" id="GO:0030170">
    <property type="term" value="F:pyridoxal phosphate binding"/>
    <property type="evidence" value="ECO:0007669"/>
    <property type="project" value="UniProtKB-UniRule"/>
</dbReference>
<dbReference type="GO" id="GO:0033362">
    <property type="term" value="P:lysine biosynthetic process via diaminopimelate, diaminopimelate-aminotransferase pathway"/>
    <property type="evidence" value="ECO:0007669"/>
    <property type="project" value="UniProtKB-UniRule"/>
</dbReference>
<dbReference type="CDD" id="cd00609">
    <property type="entry name" value="AAT_like"/>
    <property type="match status" value="1"/>
</dbReference>
<dbReference type="FunFam" id="3.40.640.10:FF:000099">
    <property type="entry name" value="LL-diaminopimelate aminotransferase, chloroplastic"/>
    <property type="match status" value="1"/>
</dbReference>
<dbReference type="Gene3D" id="3.90.1150.10">
    <property type="entry name" value="Aspartate Aminotransferase, domain 1"/>
    <property type="match status" value="1"/>
</dbReference>
<dbReference type="Gene3D" id="3.40.640.10">
    <property type="entry name" value="Type I PLP-dependent aspartate aminotransferase-like (Major domain)"/>
    <property type="match status" value="1"/>
</dbReference>
<dbReference type="HAMAP" id="MF_01642">
    <property type="entry name" value="DapL_aminotrans_1"/>
    <property type="match status" value="1"/>
</dbReference>
<dbReference type="InterPro" id="IPR004839">
    <property type="entry name" value="Aminotransferase_I/II_large"/>
</dbReference>
<dbReference type="InterPro" id="IPR019942">
    <property type="entry name" value="DapL/ALD1"/>
</dbReference>
<dbReference type="InterPro" id="IPR015424">
    <property type="entry name" value="PyrdxlP-dep_Trfase"/>
</dbReference>
<dbReference type="InterPro" id="IPR015421">
    <property type="entry name" value="PyrdxlP-dep_Trfase_major"/>
</dbReference>
<dbReference type="InterPro" id="IPR015422">
    <property type="entry name" value="PyrdxlP-dep_Trfase_small"/>
</dbReference>
<dbReference type="NCBIfam" id="TIGR03542">
    <property type="entry name" value="DAPAT_plant"/>
    <property type="match status" value="1"/>
</dbReference>
<dbReference type="PANTHER" id="PTHR43144">
    <property type="entry name" value="AMINOTRANSFERASE"/>
    <property type="match status" value="1"/>
</dbReference>
<dbReference type="Pfam" id="PF00155">
    <property type="entry name" value="Aminotran_1_2"/>
    <property type="match status" value="1"/>
</dbReference>
<dbReference type="SUPFAM" id="SSF53383">
    <property type="entry name" value="PLP-dependent transferases"/>
    <property type="match status" value="1"/>
</dbReference>
<protein>
    <recommendedName>
        <fullName evidence="1 3">LL-diaminopimelate aminotransferase</fullName>
        <shortName evidence="1 3">DAP-AT</shortName>
        <shortName evidence="1 3">DAP-aminotransferase</shortName>
        <shortName evidence="1 3">LL-DAP-aminotransferase</shortName>
        <ecNumber evidence="1 2">2.6.1.83</ecNumber>
    </recommendedName>
</protein>
<proteinExistence type="evidence at protein level"/>
<gene>
    <name evidence="1" type="primary">dapL</name>
    <name type="ordered locus">sll0480</name>
</gene>
<reference key="1">
    <citation type="journal article" date="1996" name="DNA Res.">
        <title>Sequence analysis of the genome of the unicellular cyanobacterium Synechocystis sp. strain PCC6803. II. Sequence determination of the entire genome and assignment of potential protein-coding regions.</title>
        <authorList>
            <person name="Kaneko T."/>
            <person name="Sato S."/>
            <person name="Kotani H."/>
            <person name="Tanaka A."/>
            <person name="Asamizu E."/>
            <person name="Nakamura Y."/>
            <person name="Miyajima N."/>
            <person name="Hirosawa M."/>
            <person name="Sugiura M."/>
            <person name="Sasamoto S."/>
            <person name="Kimura T."/>
            <person name="Hosouchi T."/>
            <person name="Matsuno A."/>
            <person name="Muraki A."/>
            <person name="Nakazaki N."/>
            <person name="Naruo K."/>
            <person name="Okumura S."/>
            <person name="Shimpo S."/>
            <person name="Takeuchi C."/>
            <person name="Wada T."/>
            <person name="Watanabe A."/>
            <person name="Yamada M."/>
            <person name="Yasuda M."/>
            <person name="Tabata S."/>
        </authorList>
    </citation>
    <scope>NUCLEOTIDE SEQUENCE [LARGE SCALE GENOMIC DNA]</scope>
    <source>
        <strain>ATCC 27184 / PCC 6803 / Kazusa</strain>
    </source>
</reference>
<reference key="2">
    <citation type="journal article" date="2006" name="Plant Physiol.">
        <title>An LL-diaminopimelate aminotransferase defines a novel variant of the lysine biosynthesis pathway in plants.</title>
        <authorList>
            <person name="Hudson A.O."/>
            <person name="Singh B.K."/>
            <person name="Leustek T."/>
            <person name="Gilvarg C."/>
        </authorList>
    </citation>
    <scope>FUNCTION</scope>
    <scope>CATALYTIC ACTIVITY</scope>
</reference>
<name>DAPAT_SYNY3</name>
<keyword id="KW-0032">Aminotransferase</keyword>
<keyword id="KW-0663">Pyridoxal phosphate</keyword>
<keyword id="KW-1185">Reference proteome</keyword>
<keyword id="KW-0808">Transferase</keyword>
<sequence>MASINDNYLKLKAGYLFPEIARRVNAFTTANPNAQVIKLGIGDVTEPLPLACRQAMAKAIDDMGDRQTFKGYGPEQGYAWLREKIAQHDFQARGCEVNAEEIFISDGSKCDTGNILDIFGKDNTIAVTDPVYPVYVDTNVMAGHTGDANEKGEYGGLVYLPISAENDFVAAIPSKKVDLIYLCFPNNPTGATATKAYLKQWVDYALAHGSIIFFDAAYEAFITDPTLPHSIYEIEGARDCAIEFRSFSKNAGFTGTRCALTVVPKTLTAKAADGSDVELWKLWNRRQSTKFNGVSYIIQRGAEAVYSPEGQAQVQELIAFYLENARIIREKLAAAGLQVYGGINAPYVWVKTPHGLSSWDFFDKLLHTVNVVGTPGSGFGAAGEGYFRISAFNSRANVEEAMERITSTLKLG</sequence>
<feature type="chain" id="PRO_0000312554" description="LL-diaminopimelate aminotransferase">
    <location>
        <begin position="1"/>
        <end position="412"/>
    </location>
</feature>
<feature type="binding site" evidence="1">
    <location>
        <position position="15"/>
    </location>
    <ligand>
        <name>substrate</name>
    </ligand>
</feature>
<feature type="binding site" evidence="1">
    <location>
        <position position="42"/>
    </location>
    <ligand>
        <name>substrate</name>
    </ligand>
</feature>
<feature type="binding site" evidence="1">
    <location>
        <position position="72"/>
    </location>
    <ligand>
        <name>pyridoxal 5'-phosphate</name>
        <dbReference type="ChEBI" id="CHEBI:597326"/>
    </ligand>
</feature>
<feature type="binding site" evidence="1">
    <location>
        <begin position="108"/>
        <end position="109"/>
    </location>
    <ligand>
        <name>pyridoxal 5'-phosphate</name>
        <dbReference type="ChEBI" id="CHEBI:597326"/>
    </ligand>
</feature>
<feature type="binding site" evidence="1">
    <location>
        <position position="109"/>
    </location>
    <ligand>
        <name>substrate</name>
    </ligand>
</feature>
<feature type="binding site" evidence="1">
    <location>
        <position position="132"/>
    </location>
    <ligand>
        <name>pyridoxal 5'-phosphate</name>
        <dbReference type="ChEBI" id="CHEBI:597326"/>
    </ligand>
</feature>
<feature type="binding site" evidence="1">
    <location>
        <position position="132"/>
    </location>
    <ligand>
        <name>substrate</name>
    </ligand>
</feature>
<feature type="binding site" evidence="1">
    <location>
        <position position="187"/>
    </location>
    <ligand>
        <name>pyridoxal 5'-phosphate</name>
        <dbReference type="ChEBI" id="CHEBI:597326"/>
    </ligand>
</feature>
<feature type="binding site" evidence="1">
    <location>
        <position position="187"/>
    </location>
    <ligand>
        <name>substrate</name>
    </ligand>
</feature>
<feature type="binding site" evidence="1">
    <location>
        <position position="218"/>
    </location>
    <ligand>
        <name>pyridoxal 5'-phosphate</name>
        <dbReference type="ChEBI" id="CHEBI:597326"/>
    </ligand>
</feature>
<feature type="binding site" evidence="1">
    <location>
        <begin position="246"/>
        <end position="248"/>
    </location>
    <ligand>
        <name>pyridoxal 5'-phosphate</name>
        <dbReference type="ChEBI" id="CHEBI:597326"/>
    </ligand>
</feature>
<feature type="binding site" evidence="1">
    <location>
        <position position="257"/>
    </location>
    <ligand>
        <name>pyridoxal 5'-phosphate</name>
        <dbReference type="ChEBI" id="CHEBI:597326"/>
    </ligand>
</feature>
<feature type="binding site" evidence="1">
    <location>
        <position position="292"/>
    </location>
    <ligand>
        <name>pyridoxal 5'-phosphate</name>
        <dbReference type="ChEBI" id="CHEBI:597326"/>
    </ligand>
</feature>
<feature type="binding site" evidence="1">
    <location>
        <position position="292"/>
    </location>
    <ligand>
        <name>substrate</name>
    </ligand>
</feature>
<feature type="binding site" evidence="1">
    <location>
        <position position="388"/>
    </location>
    <ligand>
        <name>substrate</name>
    </ligand>
</feature>
<feature type="modified residue" description="N6-(pyridoxal phosphate)lysine" evidence="1">
    <location>
        <position position="249"/>
    </location>
</feature>
<accession>Q55828</accession>
<organism>
    <name type="scientific">Synechocystis sp. (strain ATCC 27184 / PCC 6803 / Kazusa)</name>
    <dbReference type="NCBI Taxonomy" id="1111708"/>
    <lineage>
        <taxon>Bacteria</taxon>
        <taxon>Bacillati</taxon>
        <taxon>Cyanobacteriota</taxon>
        <taxon>Cyanophyceae</taxon>
        <taxon>Synechococcales</taxon>
        <taxon>Merismopediaceae</taxon>
        <taxon>Synechocystis</taxon>
    </lineage>
</organism>
<comment type="function">
    <text evidence="2">Involved in the synthesis of meso-diaminopimelate (m-DAP or DL-DAP), required for both lysine and peptidoglycan biosynthesis. Catalyzes the direct conversion of tetrahydrodipicolinate to LL-diaminopimelate.</text>
</comment>
<comment type="catalytic activity">
    <reaction evidence="1 2">
        <text>(2S,6S)-2,6-diaminopimelate + 2-oxoglutarate = (S)-2,3,4,5-tetrahydrodipicolinate + L-glutamate + H2O + H(+)</text>
        <dbReference type="Rhea" id="RHEA:23988"/>
        <dbReference type="ChEBI" id="CHEBI:15377"/>
        <dbReference type="ChEBI" id="CHEBI:15378"/>
        <dbReference type="ChEBI" id="CHEBI:16810"/>
        <dbReference type="ChEBI" id="CHEBI:16845"/>
        <dbReference type="ChEBI" id="CHEBI:29985"/>
        <dbReference type="ChEBI" id="CHEBI:57609"/>
        <dbReference type="EC" id="2.6.1.83"/>
    </reaction>
</comment>
<comment type="cofactor">
    <cofactor evidence="1">
        <name>pyridoxal 5'-phosphate</name>
        <dbReference type="ChEBI" id="CHEBI:597326"/>
    </cofactor>
</comment>
<comment type="pathway">
    <text evidence="1">Amino-acid biosynthesis; L-lysine biosynthesis via DAP pathway; LL-2,6-diaminopimelate from (S)-tetrahydrodipicolinate (aminotransferase route): step 1/1.</text>
</comment>
<comment type="subunit">
    <text evidence="1">Homodimer.</text>
</comment>
<comment type="similarity">
    <text evidence="1">Belongs to the class-I pyridoxal-phosphate-dependent aminotransferase family. LL-diaminopimelate aminotransferase subfamily.</text>
</comment>